<evidence type="ECO:0000250" key="1">
    <source>
        <dbReference type="UniProtKB" id="P02086"/>
    </source>
</evidence>
<evidence type="ECO:0000250" key="2">
    <source>
        <dbReference type="UniProtKB" id="P68871"/>
    </source>
</evidence>
<evidence type="ECO:0000255" key="3">
    <source>
        <dbReference type="PROSITE-ProRule" id="PRU00238"/>
    </source>
</evidence>
<evidence type="ECO:0000269" key="4">
    <source>
    </source>
</evidence>
<dbReference type="PIR" id="A02367">
    <property type="entry name" value="HBGC"/>
</dbReference>
<dbReference type="PIR" id="A90683">
    <property type="entry name" value="HBGC2"/>
</dbReference>
<dbReference type="SMR" id="P02050"/>
<dbReference type="GO" id="GO:0072562">
    <property type="term" value="C:blood microparticle"/>
    <property type="evidence" value="ECO:0007669"/>
    <property type="project" value="TreeGrafter"/>
</dbReference>
<dbReference type="GO" id="GO:0031838">
    <property type="term" value="C:haptoglobin-hemoglobin complex"/>
    <property type="evidence" value="ECO:0007669"/>
    <property type="project" value="TreeGrafter"/>
</dbReference>
<dbReference type="GO" id="GO:0005833">
    <property type="term" value="C:hemoglobin complex"/>
    <property type="evidence" value="ECO:0007669"/>
    <property type="project" value="InterPro"/>
</dbReference>
<dbReference type="GO" id="GO:0031720">
    <property type="term" value="F:haptoglobin binding"/>
    <property type="evidence" value="ECO:0007669"/>
    <property type="project" value="TreeGrafter"/>
</dbReference>
<dbReference type="GO" id="GO:0020037">
    <property type="term" value="F:heme binding"/>
    <property type="evidence" value="ECO:0007669"/>
    <property type="project" value="InterPro"/>
</dbReference>
<dbReference type="GO" id="GO:0031721">
    <property type="term" value="F:hemoglobin alpha binding"/>
    <property type="evidence" value="ECO:0007669"/>
    <property type="project" value="TreeGrafter"/>
</dbReference>
<dbReference type="GO" id="GO:0046872">
    <property type="term" value="F:metal ion binding"/>
    <property type="evidence" value="ECO:0007669"/>
    <property type="project" value="UniProtKB-KW"/>
</dbReference>
<dbReference type="GO" id="GO:0043177">
    <property type="term" value="F:organic acid binding"/>
    <property type="evidence" value="ECO:0007669"/>
    <property type="project" value="TreeGrafter"/>
</dbReference>
<dbReference type="GO" id="GO:0019825">
    <property type="term" value="F:oxygen binding"/>
    <property type="evidence" value="ECO:0007669"/>
    <property type="project" value="InterPro"/>
</dbReference>
<dbReference type="GO" id="GO:0005344">
    <property type="term" value="F:oxygen carrier activity"/>
    <property type="evidence" value="ECO:0007669"/>
    <property type="project" value="UniProtKB-KW"/>
</dbReference>
<dbReference type="GO" id="GO:0004601">
    <property type="term" value="F:peroxidase activity"/>
    <property type="evidence" value="ECO:0007669"/>
    <property type="project" value="TreeGrafter"/>
</dbReference>
<dbReference type="GO" id="GO:0042744">
    <property type="term" value="P:hydrogen peroxide catabolic process"/>
    <property type="evidence" value="ECO:0007669"/>
    <property type="project" value="TreeGrafter"/>
</dbReference>
<dbReference type="CDD" id="cd08925">
    <property type="entry name" value="Hb-beta-like"/>
    <property type="match status" value="1"/>
</dbReference>
<dbReference type="FunFam" id="1.10.490.10:FF:000001">
    <property type="entry name" value="Hemoglobin subunit beta"/>
    <property type="match status" value="1"/>
</dbReference>
<dbReference type="Gene3D" id="1.10.490.10">
    <property type="entry name" value="Globins"/>
    <property type="match status" value="1"/>
</dbReference>
<dbReference type="InterPro" id="IPR000971">
    <property type="entry name" value="Globin"/>
</dbReference>
<dbReference type="InterPro" id="IPR009050">
    <property type="entry name" value="Globin-like_sf"/>
</dbReference>
<dbReference type="InterPro" id="IPR012292">
    <property type="entry name" value="Globin/Proto"/>
</dbReference>
<dbReference type="InterPro" id="IPR002337">
    <property type="entry name" value="Hemoglobin_b"/>
</dbReference>
<dbReference type="InterPro" id="IPR050056">
    <property type="entry name" value="Hemoglobin_oxygen_transport"/>
</dbReference>
<dbReference type="PANTHER" id="PTHR11442">
    <property type="entry name" value="HEMOGLOBIN FAMILY MEMBER"/>
    <property type="match status" value="1"/>
</dbReference>
<dbReference type="PANTHER" id="PTHR11442:SF42">
    <property type="entry name" value="HEMOGLOBIN SUBUNIT BETA"/>
    <property type="match status" value="1"/>
</dbReference>
<dbReference type="Pfam" id="PF00042">
    <property type="entry name" value="Globin"/>
    <property type="match status" value="1"/>
</dbReference>
<dbReference type="PRINTS" id="PR00814">
    <property type="entry name" value="BETAHAEM"/>
</dbReference>
<dbReference type="SUPFAM" id="SSF46458">
    <property type="entry name" value="Globin-like"/>
    <property type="match status" value="1"/>
</dbReference>
<dbReference type="PROSITE" id="PS01033">
    <property type="entry name" value="GLOBIN"/>
    <property type="match status" value="1"/>
</dbReference>
<keyword id="KW-0007">Acetylation</keyword>
<keyword id="KW-0903">Direct protein sequencing</keyword>
<keyword id="KW-0349">Heme</keyword>
<keyword id="KW-0408">Iron</keyword>
<keyword id="KW-0479">Metal-binding</keyword>
<keyword id="KW-0561">Oxygen transport</keyword>
<keyword id="KW-0597">Phosphoprotein</keyword>
<keyword id="KW-0702">S-nitrosylation</keyword>
<keyword id="KW-0813">Transport</keyword>
<gene>
    <name type="primary">HBB</name>
</gene>
<protein>
    <recommendedName>
        <fullName>Hemoglobin subunit beta-1/2</fullName>
    </recommendedName>
    <alternativeName>
        <fullName>Beta-1/2-globin</fullName>
    </alternativeName>
    <alternativeName>
        <fullName>Hemoglobin beta-1/2 chain</fullName>
    </alternativeName>
</protein>
<proteinExistence type="evidence at protein level"/>
<name>HBB_OTOCR</name>
<feature type="chain" id="PRO_0000052961" description="Hemoglobin subunit beta-1/2">
    <location>
        <begin position="1"/>
        <end position="146"/>
    </location>
</feature>
<feature type="domain" description="Globin" evidence="3">
    <location>
        <begin position="2"/>
        <end position="146"/>
    </location>
</feature>
<feature type="binding site" description="distal binding residue">
    <location>
        <position position="63"/>
    </location>
    <ligand>
        <name>heme b</name>
        <dbReference type="ChEBI" id="CHEBI:60344"/>
    </ligand>
    <ligandPart>
        <name>Fe</name>
        <dbReference type="ChEBI" id="CHEBI:18248"/>
    </ligandPart>
</feature>
<feature type="binding site" description="proximal binding residue">
    <location>
        <position position="92"/>
    </location>
    <ligand>
        <name>heme b</name>
        <dbReference type="ChEBI" id="CHEBI:60344"/>
    </ligand>
    <ligandPart>
        <name>Fe</name>
        <dbReference type="ChEBI" id="CHEBI:18248"/>
    </ligandPart>
</feature>
<feature type="modified residue" description="N-acetylvaline" evidence="1">
    <location>
        <position position="1"/>
    </location>
</feature>
<feature type="modified residue" description="Phosphoserine" evidence="2">
    <location>
        <position position="44"/>
    </location>
</feature>
<feature type="modified residue" description="N6-acetyllysine" evidence="2">
    <location>
        <position position="59"/>
    </location>
</feature>
<feature type="modified residue" description="S-nitrosocysteine" evidence="2">
    <location>
        <position position="93"/>
    </location>
</feature>
<feature type="modified residue" description="N6-acetyllysine" evidence="2">
    <location>
        <position position="144"/>
    </location>
</feature>
<feature type="sequence variant" description="In beta-2." evidence="4">
    <original>E</original>
    <variation>Q</variation>
    <location>
        <position position="125"/>
    </location>
</feature>
<sequence>VHLTPDEKNAVCALWGKVNVEEVGGEALGRLLVVYPWTQRFFDSFGDLSSPSAVMGNPKVKAHGKKVLSAFSDGLQHLDNLCGTFAKLSELHCDKLHVNPENFRLLGNVLVCVLAHHFGKDFTPEVQAAYEKVVAGVATALAHKYH</sequence>
<comment type="function">
    <text>Involved in oxygen transport from the lung to the various peripheral tissues.</text>
</comment>
<comment type="subunit">
    <text>Heterotetramer of two alpha chains and two beta chains.</text>
</comment>
<comment type="tissue specificity">
    <text>Red blood cells.</text>
</comment>
<comment type="polymorphism">
    <text evidence="4">There are two alleles. The sequence shown is that of beta-1.</text>
</comment>
<comment type="similarity">
    <text evidence="3">Belongs to the globin family.</text>
</comment>
<organism>
    <name type="scientific">Otolemur crassicaudatus</name>
    <name type="common">Brown greater galago</name>
    <name type="synonym">Galago crassicaudatus</name>
    <dbReference type="NCBI Taxonomy" id="9463"/>
    <lineage>
        <taxon>Eukaryota</taxon>
        <taxon>Metazoa</taxon>
        <taxon>Chordata</taxon>
        <taxon>Craniata</taxon>
        <taxon>Vertebrata</taxon>
        <taxon>Euteleostomi</taxon>
        <taxon>Mammalia</taxon>
        <taxon>Eutheria</taxon>
        <taxon>Euarchontoglires</taxon>
        <taxon>Primates</taxon>
        <taxon>Strepsirrhini</taxon>
        <taxon>Lorisiformes</taxon>
        <taxon>Galagidae</taxon>
        <taxon>Otolemur</taxon>
    </lineage>
</organism>
<reference key="1">
    <citation type="journal article" date="1985" name="Biol. Chem. Hoppe-Seyler">
        <title>Amino-acid sequences of the alpha and beta chains of adult hemoglobins of the Grand Galago, Galago crassicaudatus.</title>
        <authorList>
            <person name="Watanabe B."/>
            <person name="Fujii T."/>
            <person name="Nakashima Y."/>
            <person name="Maita T."/>
            <person name="Matsuda G."/>
        </authorList>
    </citation>
    <scope>PROTEIN SEQUENCE</scope>
</reference>
<accession>P02050</accession>